<gene>
    <name evidence="1" type="primary">dapA</name>
    <name type="ordered locus">LBF_0710</name>
</gene>
<dbReference type="EC" id="4.3.3.7" evidence="1"/>
<dbReference type="EMBL" id="CP000777">
    <property type="protein sequence ID" value="ABZ93242.1"/>
    <property type="molecule type" value="Genomic_DNA"/>
</dbReference>
<dbReference type="RefSeq" id="WP_012387752.1">
    <property type="nucleotide sequence ID" value="NC_010842.1"/>
</dbReference>
<dbReference type="SMR" id="B0SCT0"/>
<dbReference type="KEGG" id="lbf:LBF_0710"/>
<dbReference type="HOGENOM" id="CLU_049343_7_1_12"/>
<dbReference type="UniPathway" id="UPA00034">
    <property type="reaction ID" value="UER00017"/>
</dbReference>
<dbReference type="GO" id="GO:0005829">
    <property type="term" value="C:cytosol"/>
    <property type="evidence" value="ECO:0007669"/>
    <property type="project" value="TreeGrafter"/>
</dbReference>
<dbReference type="GO" id="GO:0008840">
    <property type="term" value="F:4-hydroxy-tetrahydrodipicolinate synthase activity"/>
    <property type="evidence" value="ECO:0007669"/>
    <property type="project" value="UniProtKB-UniRule"/>
</dbReference>
<dbReference type="GO" id="GO:0019877">
    <property type="term" value="P:diaminopimelate biosynthetic process"/>
    <property type="evidence" value="ECO:0007669"/>
    <property type="project" value="UniProtKB-UniRule"/>
</dbReference>
<dbReference type="GO" id="GO:0009089">
    <property type="term" value="P:lysine biosynthetic process via diaminopimelate"/>
    <property type="evidence" value="ECO:0007669"/>
    <property type="project" value="UniProtKB-UniRule"/>
</dbReference>
<dbReference type="CDD" id="cd00950">
    <property type="entry name" value="DHDPS"/>
    <property type="match status" value="1"/>
</dbReference>
<dbReference type="Gene3D" id="3.20.20.70">
    <property type="entry name" value="Aldolase class I"/>
    <property type="match status" value="1"/>
</dbReference>
<dbReference type="HAMAP" id="MF_00418">
    <property type="entry name" value="DapA"/>
    <property type="match status" value="1"/>
</dbReference>
<dbReference type="InterPro" id="IPR013785">
    <property type="entry name" value="Aldolase_TIM"/>
</dbReference>
<dbReference type="InterPro" id="IPR005263">
    <property type="entry name" value="DapA"/>
</dbReference>
<dbReference type="InterPro" id="IPR002220">
    <property type="entry name" value="DapA-like"/>
</dbReference>
<dbReference type="InterPro" id="IPR020625">
    <property type="entry name" value="Schiff_base-form_aldolases_AS"/>
</dbReference>
<dbReference type="InterPro" id="IPR020624">
    <property type="entry name" value="Schiff_base-form_aldolases_CS"/>
</dbReference>
<dbReference type="NCBIfam" id="TIGR00674">
    <property type="entry name" value="dapA"/>
    <property type="match status" value="1"/>
</dbReference>
<dbReference type="PANTHER" id="PTHR12128:SF66">
    <property type="entry name" value="4-HYDROXY-2-OXOGLUTARATE ALDOLASE, MITOCHONDRIAL"/>
    <property type="match status" value="1"/>
</dbReference>
<dbReference type="PANTHER" id="PTHR12128">
    <property type="entry name" value="DIHYDRODIPICOLINATE SYNTHASE"/>
    <property type="match status" value="1"/>
</dbReference>
<dbReference type="Pfam" id="PF00701">
    <property type="entry name" value="DHDPS"/>
    <property type="match status" value="1"/>
</dbReference>
<dbReference type="PIRSF" id="PIRSF001365">
    <property type="entry name" value="DHDPS"/>
    <property type="match status" value="1"/>
</dbReference>
<dbReference type="PRINTS" id="PR00146">
    <property type="entry name" value="DHPICSNTHASE"/>
</dbReference>
<dbReference type="SMART" id="SM01130">
    <property type="entry name" value="DHDPS"/>
    <property type="match status" value="1"/>
</dbReference>
<dbReference type="SUPFAM" id="SSF51569">
    <property type="entry name" value="Aldolase"/>
    <property type="match status" value="1"/>
</dbReference>
<dbReference type="PROSITE" id="PS00665">
    <property type="entry name" value="DHDPS_1"/>
    <property type="match status" value="1"/>
</dbReference>
<dbReference type="PROSITE" id="PS00666">
    <property type="entry name" value="DHDPS_2"/>
    <property type="match status" value="1"/>
</dbReference>
<feature type="chain" id="PRO_1000124047" description="4-hydroxy-tetrahydrodipicolinate synthase">
    <location>
        <begin position="1"/>
        <end position="294"/>
    </location>
</feature>
<feature type="active site" description="Proton donor/acceptor" evidence="1">
    <location>
        <position position="132"/>
    </location>
</feature>
<feature type="active site" description="Schiff-base intermediate with substrate" evidence="1">
    <location>
        <position position="160"/>
    </location>
</feature>
<feature type="binding site" evidence="1">
    <location>
        <position position="44"/>
    </location>
    <ligand>
        <name>pyruvate</name>
        <dbReference type="ChEBI" id="CHEBI:15361"/>
    </ligand>
</feature>
<feature type="binding site" evidence="1">
    <location>
        <position position="202"/>
    </location>
    <ligand>
        <name>pyruvate</name>
        <dbReference type="ChEBI" id="CHEBI:15361"/>
    </ligand>
</feature>
<feature type="site" description="Part of a proton relay during catalysis" evidence="1">
    <location>
        <position position="43"/>
    </location>
</feature>
<feature type="site" description="Part of a proton relay during catalysis" evidence="1">
    <location>
        <position position="106"/>
    </location>
</feature>
<reference key="1">
    <citation type="journal article" date="2008" name="PLoS ONE">
        <title>Genome sequence of the saprophyte Leptospira biflexa provides insights into the evolution of Leptospira and the pathogenesis of leptospirosis.</title>
        <authorList>
            <person name="Picardeau M."/>
            <person name="Bulach D.M."/>
            <person name="Bouchier C."/>
            <person name="Zuerner R.L."/>
            <person name="Zidane N."/>
            <person name="Wilson P.J."/>
            <person name="Creno S."/>
            <person name="Kuczek E.S."/>
            <person name="Bommezzadri S."/>
            <person name="Davis J.C."/>
            <person name="McGrath A."/>
            <person name="Johnson M.J."/>
            <person name="Boursaux-Eude C."/>
            <person name="Seemann T."/>
            <person name="Rouy Z."/>
            <person name="Coppel R.L."/>
            <person name="Rood J.I."/>
            <person name="Lajus A."/>
            <person name="Davies J.K."/>
            <person name="Medigue C."/>
            <person name="Adler B."/>
        </authorList>
    </citation>
    <scope>NUCLEOTIDE SEQUENCE [LARGE SCALE GENOMIC DNA]</scope>
    <source>
        <strain>Patoc 1 / Ames</strain>
    </source>
</reference>
<keyword id="KW-0028">Amino-acid biosynthesis</keyword>
<keyword id="KW-0963">Cytoplasm</keyword>
<keyword id="KW-0220">Diaminopimelate biosynthesis</keyword>
<keyword id="KW-0456">Lyase</keyword>
<keyword id="KW-0457">Lysine biosynthesis</keyword>
<keyword id="KW-0704">Schiff base</keyword>
<accession>B0SCT0</accession>
<evidence type="ECO:0000255" key="1">
    <source>
        <dbReference type="HAMAP-Rule" id="MF_00418"/>
    </source>
</evidence>
<evidence type="ECO:0000305" key="2"/>
<sequence>MFQGVYTAVITPFRQGKIDYDSYFKILENQIRSGVAGVVPCGTTGESPTLSYEEHKELIQKTVQVVSGKIQVIAGTGSNSTKEAIELTESACADGVDGILSVNPYYNKPTQEGMFQHFTAIANVSSKPVMLYNIPGRTNVNLLPETVSRLAAHPKIAAIKEATGDLGQMAKVISQCPTNFDLLSGDDNLTLPVLSIGGKGVVSVVSNLFPRACVDMVSLYLRGDLEASKKIYYKLLPVFVNAFIETNPIPIKAAMSWFGYCSNELRLPMTSLSEGTASESFKKIVFQLKEEGIV</sequence>
<protein>
    <recommendedName>
        <fullName evidence="1">4-hydroxy-tetrahydrodipicolinate synthase</fullName>
        <shortName evidence="1">HTPA synthase</shortName>
        <ecNumber evidence="1">4.3.3.7</ecNumber>
    </recommendedName>
</protein>
<organism>
    <name type="scientific">Leptospira biflexa serovar Patoc (strain Patoc 1 / Ames)</name>
    <dbReference type="NCBI Taxonomy" id="355278"/>
    <lineage>
        <taxon>Bacteria</taxon>
        <taxon>Pseudomonadati</taxon>
        <taxon>Spirochaetota</taxon>
        <taxon>Spirochaetia</taxon>
        <taxon>Leptospirales</taxon>
        <taxon>Leptospiraceae</taxon>
        <taxon>Leptospira</taxon>
    </lineage>
</organism>
<name>DAPA_LEPBA</name>
<comment type="function">
    <text evidence="1">Catalyzes the condensation of (S)-aspartate-beta-semialdehyde [(S)-ASA] and pyruvate to 4-hydroxy-tetrahydrodipicolinate (HTPA).</text>
</comment>
<comment type="catalytic activity">
    <reaction evidence="1">
        <text>L-aspartate 4-semialdehyde + pyruvate = (2S,4S)-4-hydroxy-2,3,4,5-tetrahydrodipicolinate + H2O + H(+)</text>
        <dbReference type="Rhea" id="RHEA:34171"/>
        <dbReference type="ChEBI" id="CHEBI:15361"/>
        <dbReference type="ChEBI" id="CHEBI:15377"/>
        <dbReference type="ChEBI" id="CHEBI:15378"/>
        <dbReference type="ChEBI" id="CHEBI:67139"/>
        <dbReference type="ChEBI" id="CHEBI:537519"/>
        <dbReference type="EC" id="4.3.3.7"/>
    </reaction>
</comment>
<comment type="pathway">
    <text evidence="1">Amino-acid biosynthesis; L-lysine biosynthesis via DAP pathway; (S)-tetrahydrodipicolinate from L-aspartate: step 3/4.</text>
</comment>
<comment type="subunit">
    <text evidence="1">Homotetramer; dimer of dimers.</text>
</comment>
<comment type="subcellular location">
    <subcellularLocation>
        <location evidence="1">Cytoplasm</location>
    </subcellularLocation>
</comment>
<comment type="similarity">
    <text evidence="1">Belongs to the DapA family.</text>
</comment>
<comment type="caution">
    <text evidence="2">Was originally thought to be a dihydrodipicolinate synthase (DHDPS), catalyzing the condensation of (S)-aspartate-beta-semialdehyde [(S)-ASA] and pyruvate to dihydrodipicolinate (DHDP). However, it was shown in E.coli that the product of the enzymatic reaction is not dihydrodipicolinate but in fact (4S)-4-hydroxy-2,3,4,5-tetrahydro-(2S)-dipicolinic acid (HTPA), and that the consecutive dehydration reaction leading to DHDP is not spontaneous but catalyzed by DapB.</text>
</comment>
<proteinExistence type="inferred from homology"/>